<reference key="1">
    <citation type="journal article" date="1994" name="Cell">
        <title>C. elegans cell survival gene ced-9 encodes a functional homolog of the mammalian proto-oncogene bcl-2.</title>
        <authorList>
            <person name="Hengartner M.O."/>
            <person name="Horvitz H.R."/>
        </authorList>
    </citation>
    <scope>NUCLEOTIDE SEQUENCE [GENOMIC DNA]</scope>
</reference>
<reference key="2">
    <citation type="journal article" date="2003" name="PLoS Biol.">
        <title>The genome sequence of Caenorhabditis briggsae: a platform for comparative genomics.</title>
        <authorList>
            <person name="Stein L.D."/>
            <person name="Bao Z."/>
            <person name="Blasiar D."/>
            <person name="Blumenthal T."/>
            <person name="Brent M.R."/>
            <person name="Chen N."/>
            <person name="Chinwalla A."/>
            <person name="Clarke L."/>
            <person name="Clee C."/>
            <person name="Coghlan A."/>
            <person name="Coulson A."/>
            <person name="D'Eustachio P."/>
            <person name="Fitch D.H.A."/>
            <person name="Fulton L.A."/>
            <person name="Fulton R.E."/>
            <person name="Griffiths-Jones S."/>
            <person name="Harris T.W."/>
            <person name="Hillier L.W."/>
            <person name="Kamath R."/>
            <person name="Kuwabara P.E."/>
            <person name="Mardis E.R."/>
            <person name="Marra M.A."/>
            <person name="Miner T.L."/>
            <person name="Minx P."/>
            <person name="Mullikin J.C."/>
            <person name="Plumb R.W."/>
            <person name="Rogers J."/>
            <person name="Schein J.E."/>
            <person name="Sohrmann M."/>
            <person name="Spieth J."/>
            <person name="Stajich J.E."/>
            <person name="Wei C."/>
            <person name="Willey D."/>
            <person name="Wilson R.K."/>
            <person name="Durbin R.M."/>
            <person name="Waterston R.H."/>
        </authorList>
    </citation>
    <scope>NUCLEOTIDE SEQUENCE [LARGE SCALE GENOMIC DNA]</scope>
    <source>
        <strain>AF16</strain>
    </source>
</reference>
<name>C560_CAEBR</name>
<feature type="transit peptide" description="Mitochondrion" evidence="1">
    <location>
        <begin position="1"/>
        <end status="unknown"/>
    </location>
</feature>
<feature type="chain" id="PRO_0000003636" description="Succinate dehydrogenase cytochrome b560 subunit, mitochondrial">
    <location>
        <begin status="unknown"/>
        <end position="184"/>
    </location>
</feature>
<feature type="transmembrane region" description="Helical" evidence="1">
    <location>
        <begin position="65"/>
        <end position="94"/>
    </location>
</feature>
<feature type="topological domain" description="Mitochondrial intermembrane" evidence="1">
    <location>
        <begin position="95"/>
        <end position="114"/>
    </location>
</feature>
<feature type="transmembrane region" description="Helical" evidence="1">
    <location>
        <begin position="115"/>
        <end position="139"/>
    </location>
</feature>
<feature type="topological domain" description="Mitochondrial matrix" evidence="1">
    <location>
        <begin position="140"/>
        <end position="147"/>
    </location>
</feature>
<feature type="transmembrane region" description="Helical" evidence="1">
    <location>
        <begin position="148"/>
        <end position="169"/>
    </location>
</feature>
<feature type="topological domain" description="Mitochondrial intermembrane" evidence="1">
    <location>
        <begin position="170"/>
        <end position="172"/>
    </location>
</feature>
<feature type="binding site" description="axial binding residue" evidence="1">
    <location>
        <position position="129"/>
    </location>
    <ligand>
        <name>heme</name>
        <dbReference type="ChEBI" id="CHEBI:30413"/>
        <note>ligand shared with second transmembrane subunit</note>
    </ligand>
    <ligandPart>
        <name>Fe</name>
        <dbReference type="ChEBI" id="CHEBI:18248"/>
    </ligandPart>
</feature>
<gene>
    <name type="primary">mev-1</name>
    <name type="synonym">cyt-1</name>
    <name type="ORF">CBG24607</name>
</gene>
<protein>
    <recommendedName>
        <fullName>Succinate dehydrogenase cytochrome b560 subunit, mitochondrial</fullName>
    </recommendedName>
</protein>
<sequence length="184" mass="20244">MINIPTSILCRLGARSAISRSFGTSVVTKSEAKTPIQKFGWEYLKKQRDMKRPIAPHLTIYQPQLTWMLSGFHRISGCVMAGTLLVGGLGFAVLPLDFTTFVEYIRGWNLPCAVTAVFKYIIAFPIIFHTLNGIRFLGFDLAKGVDNIGQVYKSGWLVFGVSAVIALAIVINSCQNKSKAVKTA</sequence>
<proteinExistence type="evidence at transcript level"/>
<evidence type="ECO:0000250" key="1"/>
<evidence type="ECO:0000250" key="2">
    <source>
        <dbReference type="UniProtKB" id="D0VWV4"/>
    </source>
</evidence>
<evidence type="ECO:0000250" key="3">
    <source>
        <dbReference type="UniProtKB" id="P41956"/>
    </source>
</evidence>
<evidence type="ECO:0000305" key="4"/>
<comment type="function">
    <text evidence="2 3">Membrane-anchoring subunit of succinate dehydrogenase (SDH) that is involved in complex II of the mitochondrial electron transport chain and is responsible for transferring electrons from succinate to ubiquinone (coenzyme Q). Mediates resistance to enteropathogenic E.coli infection (By similarity).</text>
</comment>
<comment type="cofactor">
    <cofactor evidence="1">
        <name>heme</name>
        <dbReference type="ChEBI" id="CHEBI:30413"/>
    </cofactor>
    <text evidence="1">The heme is bound between the two transmembrane subunits.</text>
</comment>
<comment type="pathway">
    <text>Carbohydrate metabolism; tricarboxylic acid cycle.</text>
</comment>
<comment type="subunit">
    <text evidence="1">Component of complex II composed of four subunits: a flavoprotein (FP), iron-sulfur protein (IP), and a cytochrome b560 composed of two transmembrane proteins.</text>
</comment>
<comment type="subcellular location">
    <subcellularLocation>
        <location evidence="1">Mitochondrion inner membrane</location>
        <topology evidence="1">Multi-pass membrane protein</topology>
    </subcellularLocation>
</comment>
<comment type="developmental stage">
    <text>Is expressed at a constant level throughout development.</text>
</comment>
<comment type="similarity">
    <text evidence="4">Belongs to the cytochrome b560 family.</text>
</comment>
<dbReference type="EMBL" id="L26546">
    <property type="protein sequence ID" value="AAA20078.1"/>
    <property type="molecule type" value="Unassigned_DNA"/>
</dbReference>
<dbReference type="EMBL" id="HE601354">
    <property type="protein sequence ID" value="CAP21181.1"/>
    <property type="molecule type" value="Genomic_DNA"/>
</dbReference>
<dbReference type="SMR" id="P41955"/>
<dbReference type="FunCoup" id="P41955">
    <property type="interactions" value="1774"/>
</dbReference>
<dbReference type="STRING" id="6238.P41955"/>
<dbReference type="EnsemblMetazoa" id="CBG24607.1">
    <property type="protein sequence ID" value="CBG24607.1"/>
    <property type="gene ID" value="WBGene00042677"/>
</dbReference>
<dbReference type="KEGG" id="cbr:CBG_24607"/>
<dbReference type="CTD" id="8583299"/>
<dbReference type="WormBase" id="CBG24607">
    <property type="protein sequence ID" value="CBP12971"/>
    <property type="gene ID" value="WBGene00042677"/>
    <property type="gene designation" value="Cbr-mev-1"/>
</dbReference>
<dbReference type="eggNOG" id="KOG0449">
    <property type="taxonomic scope" value="Eukaryota"/>
</dbReference>
<dbReference type="HOGENOM" id="CLU_094691_1_0_1"/>
<dbReference type="InParanoid" id="P41955"/>
<dbReference type="OMA" id="LTWMLSG"/>
<dbReference type="OrthoDB" id="588261at2759"/>
<dbReference type="UniPathway" id="UPA00223"/>
<dbReference type="Proteomes" id="UP000008549">
    <property type="component" value="Unassembled WGS sequence"/>
</dbReference>
<dbReference type="GO" id="GO:0005743">
    <property type="term" value="C:mitochondrial inner membrane"/>
    <property type="evidence" value="ECO:0000250"/>
    <property type="project" value="UniProtKB"/>
</dbReference>
<dbReference type="GO" id="GO:0045273">
    <property type="term" value="C:respiratory chain complex II (succinate dehydrogenase)"/>
    <property type="evidence" value="ECO:0000250"/>
    <property type="project" value="UniProtKB"/>
</dbReference>
<dbReference type="GO" id="GO:0009055">
    <property type="term" value="F:electron transfer activity"/>
    <property type="evidence" value="ECO:0007669"/>
    <property type="project" value="InterPro"/>
</dbReference>
<dbReference type="GO" id="GO:0020037">
    <property type="term" value="F:heme binding"/>
    <property type="evidence" value="ECO:0000250"/>
    <property type="project" value="UniProtKB"/>
</dbReference>
<dbReference type="GO" id="GO:0046872">
    <property type="term" value="F:metal ion binding"/>
    <property type="evidence" value="ECO:0007669"/>
    <property type="project" value="UniProtKB-KW"/>
</dbReference>
<dbReference type="GO" id="GO:0008177">
    <property type="term" value="F:succinate dehydrogenase (quinone) activity"/>
    <property type="evidence" value="ECO:0007669"/>
    <property type="project" value="EnsemblMetazoa"/>
</dbReference>
<dbReference type="GO" id="GO:0050829">
    <property type="term" value="P:defense response to Gram-negative bacterium"/>
    <property type="evidence" value="ECO:0007669"/>
    <property type="project" value="EnsemblMetazoa"/>
</dbReference>
<dbReference type="GO" id="GO:0008340">
    <property type="term" value="P:determination of adult lifespan"/>
    <property type="evidence" value="ECO:0007669"/>
    <property type="project" value="EnsemblMetazoa"/>
</dbReference>
<dbReference type="GO" id="GO:0045087">
    <property type="term" value="P:innate immune response"/>
    <property type="evidence" value="ECO:0007669"/>
    <property type="project" value="EnsemblMetazoa"/>
</dbReference>
<dbReference type="GO" id="GO:0006121">
    <property type="term" value="P:mitochondrial electron transport, succinate to ubiquinone"/>
    <property type="evidence" value="ECO:0000318"/>
    <property type="project" value="GO_Central"/>
</dbReference>
<dbReference type="GO" id="GO:1902883">
    <property type="term" value="P:negative regulation of response to oxidative stress"/>
    <property type="evidence" value="ECO:0007669"/>
    <property type="project" value="EnsemblMetazoa"/>
</dbReference>
<dbReference type="GO" id="GO:1902884">
    <property type="term" value="P:positive regulation of response to oxidative stress"/>
    <property type="evidence" value="ECO:0007669"/>
    <property type="project" value="EnsemblMetazoa"/>
</dbReference>
<dbReference type="GO" id="GO:0006979">
    <property type="term" value="P:response to oxidative stress"/>
    <property type="evidence" value="ECO:0007669"/>
    <property type="project" value="EnsemblMetazoa"/>
</dbReference>
<dbReference type="GO" id="GO:0006099">
    <property type="term" value="P:tricarboxylic acid cycle"/>
    <property type="evidence" value="ECO:0007669"/>
    <property type="project" value="UniProtKB-UniPathway"/>
</dbReference>
<dbReference type="CDD" id="cd03499">
    <property type="entry name" value="SQR_TypeC_SdhC"/>
    <property type="match status" value="1"/>
</dbReference>
<dbReference type="FunFam" id="1.20.1300.10:FF:000011">
    <property type="entry name" value="Succinate dehydrogenase cytochrome b560 subunit"/>
    <property type="match status" value="1"/>
</dbReference>
<dbReference type="Gene3D" id="1.20.1300.10">
    <property type="entry name" value="Fumarate reductase/succinate dehydrogenase, transmembrane subunit"/>
    <property type="match status" value="1"/>
</dbReference>
<dbReference type="InterPro" id="IPR034804">
    <property type="entry name" value="SQR/QFR_C/D"/>
</dbReference>
<dbReference type="InterPro" id="IPR018495">
    <property type="entry name" value="Succ_DH_cyt_bsu_CS"/>
</dbReference>
<dbReference type="InterPro" id="IPR014314">
    <property type="entry name" value="Succ_DH_cytb556"/>
</dbReference>
<dbReference type="InterPro" id="IPR000701">
    <property type="entry name" value="SuccDH_FuR_B_TM-su"/>
</dbReference>
<dbReference type="NCBIfam" id="TIGR02970">
    <property type="entry name" value="succ_dehyd_cytB"/>
    <property type="match status" value="1"/>
</dbReference>
<dbReference type="PANTHER" id="PTHR10978">
    <property type="entry name" value="SUCCINATE DEHYDROGENASE CYTOCHROME B560 SUBUNIT"/>
    <property type="match status" value="1"/>
</dbReference>
<dbReference type="PANTHER" id="PTHR10978:SF5">
    <property type="entry name" value="SUCCINATE DEHYDROGENASE CYTOCHROME B560 SUBUNIT, MITOCHONDRIAL"/>
    <property type="match status" value="1"/>
</dbReference>
<dbReference type="Pfam" id="PF01127">
    <property type="entry name" value="Sdh_cyt"/>
    <property type="match status" value="1"/>
</dbReference>
<dbReference type="SUPFAM" id="SSF81343">
    <property type="entry name" value="Fumarate reductase respiratory complex transmembrane subunits"/>
    <property type="match status" value="1"/>
</dbReference>
<dbReference type="PROSITE" id="PS01000">
    <property type="entry name" value="SDH_CYT_1"/>
    <property type="match status" value="1"/>
</dbReference>
<dbReference type="PROSITE" id="PS01001">
    <property type="entry name" value="SDH_CYT_2"/>
    <property type="match status" value="1"/>
</dbReference>
<organism>
    <name type="scientific">Caenorhabditis briggsae</name>
    <dbReference type="NCBI Taxonomy" id="6238"/>
    <lineage>
        <taxon>Eukaryota</taxon>
        <taxon>Metazoa</taxon>
        <taxon>Ecdysozoa</taxon>
        <taxon>Nematoda</taxon>
        <taxon>Chromadorea</taxon>
        <taxon>Rhabditida</taxon>
        <taxon>Rhabditina</taxon>
        <taxon>Rhabditomorpha</taxon>
        <taxon>Rhabditoidea</taxon>
        <taxon>Rhabditidae</taxon>
        <taxon>Peloderinae</taxon>
        <taxon>Caenorhabditis</taxon>
    </lineage>
</organism>
<keyword id="KW-0249">Electron transport</keyword>
<keyword id="KW-0349">Heme</keyword>
<keyword id="KW-0408">Iron</keyword>
<keyword id="KW-0472">Membrane</keyword>
<keyword id="KW-0479">Metal-binding</keyword>
<keyword id="KW-0496">Mitochondrion</keyword>
<keyword id="KW-0999">Mitochondrion inner membrane</keyword>
<keyword id="KW-1185">Reference proteome</keyword>
<keyword id="KW-0809">Transit peptide</keyword>
<keyword id="KW-0812">Transmembrane</keyword>
<keyword id="KW-1133">Transmembrane helix</keyword>
<keyword id="KW-0813">Transport</keyword>
<keyword id="KW-0816">Tricarboxylic acid cycle</keyword>
<accession>P41955</accession>
<accession>A8WL36</accession>